<dbReference type="EMBL" id="CP000437">
    <property type="protein sequence ID" value="ABI82203.1"/>
    <property type="molecule type" value="Genomic_DNA"/>
</dbReference>
<dbReference type="RefSeq" id="WP_003014183.1">
    <property type="nucleotide sequence ID" value="NC_017463.1"/>
</dbReference>
<dbReference type="SMR" id="Q0BNY1"/>
<dbReference type="KEGG" id="fth:FTH_0172"/>
<dbReference type="GO" id="GO:0005886">
    <property type="term" value="C:plasma membrane"/>
    <property type="evidence" value="ECO:0007669"/>
    <property type="project" value="UniProtKB-SubCell"/>
</dbReference>
<dbReference type="GO" id="GO:0032977">
    <property type="term" value="F:membrane insertase activity"/>
    <property type="evidence" value="ECO:0007669"/>
    <property type="project" value="InterPro"/>
</dbReference>
<dbReference type="GO" id="GO:0051205">
    <property type="term" value="P:protein insertion into membrane"/>
    <property type="evidence" value="ECO:0007669"/>
    <property type="project" value="TreeGrafter"/>
</dbReference>
<dbReference type="GO" id="GO:0015031">
    <property type="term" value="P:protein transport"/>
    <property type="evidence" value="ECO:0007669"/>
    <property type="project" value="UniProtKB-KW"/>
</dbReference>
<dbReference type="CDD" id="cd20070">
    <property type="entry name" value="5TM_YidC_Alb3"/>
    <property type="match status" value="1"/>
</dbReference>
<dbReference type="CDD" id="cd19961">
    <property type="entry name" value="EcYidC-like_peri"/>
    <property type="match status" value="1"/>
</dbReference>
<dbReference type="Gene3D" id="2.70.98.90">
    <property type="match status" value="1"/>
</dbReference>
<dbReference type="HAMAP" id="MF_01810">
    <property type="entry name" value="YidC_type1"/>
    <property type="match status" value="1"/>
</dbReference>
<dbReference type="InterPro" id="IPR019998">
    <property type="entry name" value="Membr_insert_YidC"/>
</dbReference>
<dbReference type="InterPro" id="IPR028053">
    <property type="entry name" value="Membr_insert_YidC_N"/>
</dbReference>
<dbReference type="InterPro" id="IPR001708">
    <property type="entry name" value="YidC/ALB3/OXA1/COX18"/>
</dbReference>
<dbReference type="InterPro" id="IPR028055">
    <property type="entry name" value="YidC/Oxa/ALB_C"/>
</dbReference>
<dbReference type="InterPro" id="IPR047196">
    <property type="entry name" value="YidC_ALB_C"/>
</dbReference>
<dbReference type="InterPro" id="IPR038221">
    <property type="entry name" value="YidC_periplasmic_sf"/>
</dbReference>
<dbReference type="NCBIfam" id="NF002352">
    <property type="entry name" value="PRK01318.1-3"/>
    <property type="match status" value="1"/>
</dbReference>
<dbReference type="NCBIfam" id="TIGR03593">
    <property type="entry name" value="yidC_nterm"/>
    <property type="match status" value="1"/>
</dbReference>
<dbReference type="NCBIfam" id="TIGR03592">
    <property type="entry name" value="yidC_oxa1_cterm"/>
    <property type="match status" value="1"/>
</dbReference>
<dbReference type="PANTHER" id="PTHR12428:SF65">
    <property type="entry name" value="CYTOCHROME C OXIDASE ASSEMBLY PROTEIN COX18, MITOCHONDRIAL"/>
    <property type="match status" value="1"/>
</dbReference>
<dbReference type="PANTHER" id="PTHR12428">
    <property type="entry name" value="OXA1"/>
    <property type="match status" value="1"/>
</dbReference>
<dbReference type="Pfam" id="PF02096">
    <property type="entry name" value="60KD_IMP"/>
    <property type="match status" value="1"/>
</dbReference>
<dbReference type="Pfam" id="PF14849">
    <property type="entry name" value="YidC_periplas"/>
    <property type="match status" value="1"/>
</dbReference>
<dbReference type="PRINTS" id="PR00701">
    <property type="entry name" value="60KDINNERMP"/>
</dbReference>
<dbReference type="PRINTS" id="PR01900">
    <property type="entry name" value="YIDCPROTEIN"/>
</dbReference>
<name>YIDC_FRATO</name>
<accession>Q0BNY1</accession>
<gene>
    <name evidence="1" type="primary">yidC</name>
    <name type="ordered locus">FTH_0172</name>
</gene>
<sequence length="551" mass="61952">MKANHIRILLLVTIAIMFISLMGKWEQTFPADNTKQQTSATQNNSHYDNADSSTNTDVTITDAKSSLAKETNFSKYDNAKSITINTVVFKDVKVSLLDGAIISASLKDYSISLDDKTPMSLLTDKSGSEYIAKSTIVVNKQPISVNFEDQGIKIENSKQILTLTGSADGLQITRTYTFDDTKYNISVSQNIKNTTSAPVNVIVDDSFARDFDPAGDSFSLLNAHSYTFTGVAYSTAKDSFRKESFKDISKTNGQPTVINSDGQGWVAFLQHYFVSAWIPQSTNAKIYYKNLNGDVFEAGAFTGATIAPNQSENISSILYTGPIIKANLVDLAPNLEKTLDYGMLSFFSEIIFWVMNHIHSLVGNWGLAIILVTCLIKLIFYPLSAKSYRSMAKMRMLQPRIKRLQETYKDDRQALGKKMMELYKEEKVNPLSGCLPMLIQIPIFISLYWVLLESVELRQAPFIFWIHDLSMKDPYFVLPVLMGLSMFLQQKLSPAPADPMQAKVMMFLPVIFTFLFASFPSGLVLYWLTNNLISISQQWIITRHYQATHKK</sequence>
<evidence type="ECO:0000255" key="1">
    <source>
        <dbReference type="HAMAP-Rule" id="MF_01810"/>
    </source>
</evidence>
<evidence type="ECO:0000256" key="2">
    <source>
        <dbReference type="SAM" id="MobiDB-lite"/>
    </source>
</evidence>
<feature type="chain" id="PRO_1000070097" description="Membrane protein insertase YidC">
    <location>
        <begin position="1"/>
        <end position="551"/>
    </location>
</feature>
<feature type="transmembrane region" description="Helical" evidence="1">
    <location>
        <begin position="3"/>
        <end position="23"/>
    </location>
</feature>
<feature type="transmembrane region" description="Helical" evidence="1">
    <location>
        <begin position="361"/>
        <end position="381"/>
    </location>
</feature>
<feature type="transmembrane region" description="Helical" evidence="1">
    <location>
        <begin position="431"/>
        <end position="451"/>
    </location>
</feature>
<feature type="transmembrane region" description="Helical" evidence="1">
    <location>
        <begin position="504"/>
        <end position="524"/>
    </location>
</feature>
<feature type="region of interest" description="Disordered" evidence="2">
    <location>
        <begin position="33"/>
        <end position="55"/>
    </location>
</feature>
<proteinExistence type="inferred from homology"/>
<reference key="1">
    <citation type="journal article" date="2006" name="J. Bacteriol.">
        <title>Chromosome rearrangement and diversification of Francisella tularensis revealed by the type B (OSU18) genome sequence.</title>
        <authorList>
            <person name="Petrosino J.F."/>
            <person name="Xiang Q."/>
            <person name="Karpathy S.E."/>
            <person name="Jiang H."/>
            <person name="Yerrapragada S."/>
            <person name="Liu Y."/>
            <person name="Gioia J."/>
            <person name="Hemphill L."/>
            <person name="Gonzalez A."/>
            <person name="Raghavan T.M."/>
            <person name="Uzman A."/>
            <person name="Fox G.E."/>
            <person name="Highlander S."/>
            <person name="Reichard M."/>
            <person name="Morton R.J."/>
            <person name="Clinkenbeard K.D."/>
            <person name="Weinstock G.M."/>
        </authorList>
    </citation>
    <scope>NUCLEOTIDE SEQUENCE [LARGE SCALE GENOMIC DNA]</scope>
    <source>
        <strain>OSU18</strain>
    </source>
</reference>
<protein>
    <recommendedName>
        <fullName evidence="1">Membrane protein insertase YidC</fullName>
    </recommendedName>
    <alternativeName>
        <fullName evidence="1">Foldase YidC</fullName>
    </alternativeName>
    <alternativeName>
        <fullName evidence="1">Membrane integrase YidC</fullName>
    </alternativeName>
    <alternativeName>
        <fullName evidence="1">Membrane protein YidC</fullName>
    </alternativeName>
</protein>
<keyword id="KW-0997">Cell inner membrane</keyword>
<keyword id="KW-1003">Cell membrane</keyword>
<keyword id="KW-0143">Chaperone</keyword>
<keyword id="KW-0472">Membrane</keyword>
<keyword id="KW-0653">Protein transport</keyword>
<keyword id="KW-0812">Transmembrane</keyword>
<keyword id="KW-1133">Transmembrane helix</keyword>
<keyword id="KW-0813">Transport</keyword>
<comment type="function">
    <text evidence="1">Required for the insertion and/or proper folding and/or complex formation of integral membrane proteins into the membrane. Involved in integration of membrane proteins that insert both dependently and independently of the Sec translocase complex, as well as at least some lipoproteins. Aids folding of multispanning membrane proteins.</text>
</comment>
<comment type="subunit">
    <text evidence="1">Interacts with the Sec translocase complex via SecD. Specifically interacts with transmembrane segments of nascent integral membrane proteins during membrane integration.</text>
</comment>
<comment type="subcellular location">
    <subcellularLocation>
        <location evidence="1">Cell inner membrane</location>
        <topology evidence="1">Multi-pass membrane protein</topology>
    </subcellularLocation>
</comment>
<comment type="similarity">
    <text evidence="1">Belongs to the OXA1/ALB3/YidC family. Type 1 subfamily.</text>
</comment>
<organism>
    <name type="scientific">Francisella tularensis subsp. holarctica (strain OSU18)</name>
    <dbReference type="NCBI Taxonomy" id="393011"/>
    <lineage>
        <taxon>Bacteria</taxon>
        <taxon>Pseudomonadati</taxon>
        <taxon>Pseudomonadota</taxon>
        <taxon>Gammaproteobacteria</taxon>
        <taxon>Thiotrichales</taxon>
        <taxon>Francisellaceae</taxon>
        <taxon>Francisella</taxon>
    </lineage>
</organism>